<comment type="subunit">
    <text evidence="1">Part of the 50S ribosomal subunit. Contacts protein L32.</text>
</comment>
<comment type="similarity">
    <text evidence="1">Belongs to the bacterial ribosomal protein bL17 family.</text>
</comment>
<protein>
    <recommendedName>
        <fullName evidence="1">Large ribosomal subunit protein bL17</fullName>
    </recommendedName>
    <alternativeName>
        <fullName evidence="3">50S ribosomal protein L17</fullName>
    </alternativeName>
</protein>
<accession>Q6AD22</accession>
<feature type="chain" id="PRO_1000055860" description="Large ribosomal subunit protein bL17">
    <location>
        <begin position="1"/>
        <end position="159"/>
    </location>
</feature>
<feature type="region of interest" description="Disordered" evidence="2">
    <location>
        <begin position="119"/>
        <end position="159"/>
    </location>
</feature>
<feature type="compositionally biased region" description="Low complexity" evidence="2">
    <location>
        <begin position="119"/>
        <end position="138"/>
    </location>
</feature>
<feature type="compositionally biased region" description="Acidic residues" evidence="2">
    <location>
        <begin position="143"/>
        <end position="159"/>
    </location>
</feature>
<evidence type="ECO:0000255" key="1">
    <source>
        <dbReference type="HAMAP-Rule" id="MF_01368"/>
    </source>
</evidence>
<evidence type="ECO:0000256" key="2">
    <source>
        <dbReference type="SAM" id="MobiDB-lite"/>
    </source>
</evidence>
<evidence type="ECO:0000305" key="3"/>
<proteinExistence type="inferred from homology"/>
<sequence>MPQPTKGPRLGGGPAHERLMLANLAAALFAHKSIKTTETKAKRLRPYAERLITFAKRGDLHARRRVLAVIGDKTVVHELFTEIAPLLAEREGGYTRITKLGFRKGDNAPMAQIELVLEPVTPKAKPAKSTAKAAPKSKAPVEETPDEPASEETAEAEAD</sequence>
<dbReference type="EMBL" id="AE016822">
    <property type="protein sequence ID" value="AAT89722.1"/>
    <property type="molecule type" value="Genomic_DNA"/>
</dbReference>
<dbReference type="SMR" id="Q6AD22"/>
<dbReference type="STRING" id="281090.Lxx20070"/>
<dbReference type="KEGG" id="lxx:Lxx20070"/>
<dbReference type="eggNOG" id="COG0203">
    <property type="taxonomic scope" value="Bacteria"/>
</dbReference>
<dbReference type="HOGENOM" id="CLU_074407_0_0_11"/>
<dbReference type="Proteomes" id="UP000001306">
    <property type="component" value="Chromosome"/>
</dbReference>
<dbReference type="GO" id="GO:0022625">
    <property type="term" value="C:cytosolic large ribosomal subunit"/>
    <property type="evidence" value="ECO:0007669"/>
    <property type="project" value="TreeGrafter"/>
</dbReference>
<dbReference type="GO" id="GO:0003735">
    <property type="term" value="F:structural constituent of ribosome"/>
    <property type="evidence" value="ECO:0007669"/>
    <property type="project" value="InterPro"/>
</dbReference>
<dbReference type="GO" id="GO:0006412">
    <property type="term" value="P:translation"/>
    <property type="evidence" value="ECO:0007669"/>
    <property type="project" value="UniProtKB-UniRule"/>
</dbReference>
<dbReference type="FunFam" id="3.90.1030.10:FF:000001">
    <property type="entry name" value="50S ribosomal protein L17"/>
    <property type="match status" value="1"/>
</dbReference>
<dbReference type="Gene3D" id="3.90.1030.10">
    <property type="entry name" value="Ribosomal protein L17"/>
    <property type="match status" value="1"/>
</dbReference>
<dbReference type="HAMAP" id="MF_01368">
    <property type="entry name" value="Ribosomal_bL17"/>
    <property type="match status" value="1"/>
</dbReference>
<dbReference type="InterPro" id="IPR000456">
    <property type="entry name" value="Ribosomal_bL17"/>
</dbReference>
<dbReference type="InterPro" id="IPR047859">
    <property type="entry name" value="Ribosomal_bL17_CS"/>
</dbReference>
<dbReference type="InterPro" id="IPR036373">
    <property type="entry name" value="Ribosomal_bL17_sf"/>
</dbReference>
<dbReference type="NCBIfam" id="TIGR00059">
    <property type="entry name" value="L17"/>
    <property type="match status" value="1"/>
</dbReference>
<dbReference type="PANTHER" id="PTHR14413:SF16">
    <property type="entry name" value="LARGE RIBOSOMAL SUBUNIT PROTEIN BL17M"/>
    <property type="match status" value="1"/>
</dbReference>
<dbReference type="PANTHER" id="PTHR14413">
    <property type="entry name" value="RIBOSOMAL PROTEIN L17"/>
    <property type="match status" value="1"/>
</dbReference>
<dbReference type="Pfam" id="PF01196">
    <property type="entry name" value="Ribosomal_L17"/>
    <property type="match status" value="1"/>
</dbReference>
<dbReference type="SUPFAM" id="SSF64263">
    <property type="entry name" value="Prokaryotic ribosomal protein L17"/>
    <property type="match status" value="1"/>
</dbReference>
<dbReference type="PROSITE" id="PS01167">
    <property type="entry name" value="RIBOSOMAL_L17"/>
    <property type="match status" value="1"/>
</dbReference>
<organism>
    <name type="scientific">Leifsonia xyli subsp. xyli (strain CTCB07)</name>
    <dbReference type="NCBI Taxonomy" id="281090"/>
    <lineage>
        <taxon>Bacteria</taxon>
        <taxon>Bacillati</taxon>
        <taxon>Actinomycetota</taxon>
        <taxon>Actinomycetes</taxon>
        <taxon>Micrococcales</taxon>
        <taxon>Microbacteriaceae</taxon>
        <taxon>Leifsonia</taxon>
    </lineage>
</organism>
<reference key="1">
    <citation type="journal article" date="2004" name="Mol. Plant Microbe Interact.">
        <title>The genome sequence of the Gram-positive sugarcane pathogen Leifsonia xyli subsp. xyli.</title>
        <authorList>
            <person name="Monteiro-Vitorello C.B."/>
            <person name="Camargo L.E.A."/>
            <person name="Van Sluys M.A."/>
            <person name="Kitajima J.P."/>
            <person name="Truffi D."/>
            <person name="do Amaral A.M."/>
            <person name="Harakava R."/>
            <person name="de Oliveira J.C.F."/>
            <person name="Wood D."/>
            <person name="de Oliveira M.C."/>
            <person name="Miyaki C.Y."/>
            <person name="Takita M.A."/>
            <person name="da Silva A.C.R."/>
            <person name="Furlan L.R."/>
            <person name="Carraro D.M."/>
            <person name="Camarotte G."/>
            <person name="Almeida N.F. Jr."/>
            <person name="Carrer H."/>
            <person name="Coutinho L.L."/>
            <person name="El-Dorry H.A."/>
            <person name="Ferro M.I.T."/>
            <person name="Gagliardi P.R."/>
            <person name="Giglioti E."/>
            <person name="Goldman M.H.S."/>
            <person name="Goldman G.H."/>
            <person name="Kimura E.T."/>
            <person name="Ferro E.S."/>
            <person name="Kuramae E.E."/>
            <person name="Lemos E.G.M."/>
            <person name="Lemos M.V.F."/>
            <person name="Mauro S.M.Z."/>
            <person name="Machado M.A."/>
            <person name="Marino C.L."/>
            <person name="Menck C.F."/>
            <person name="Nunes L.R."/>
            <person name="Oliveira R.C."/>
            <person name="Pereira G.G."/>
            <person name="Siqueira W."/>
            <person name="de Souza A.A."/>
            <person name="Tsai S.M."/>
            <person name="Zanca A.S."/>
            <person name="Simpson A.J.G."/>
            <person name="Brumbley S.M."/>
            <person name="Setubal J.C."/>
        </authorList>
    </citation>
    <scope>NUCLEOTIDE SEQUENCE [LARGE SCALE GENOMIC DNA]</scope>
    <source>
        <strain>CTCB07</strain>
    </source>
</reference>
<keyword id="KW-1185">Reference proteome</keyword>
<keyword id="KW-0687">Ribonucleoprotein</keyword>
<keyword id="KW-0689">Ribosomal protein</keyword>
<gene>
    <name evidence="1" type="primary">rplQ</name>
    <name type="ordered locus">Lxx20070</name>
</gene>
<name>RL17_LEIXX</name>